<comment type="function">
    <text evidence="4">Required for the formation of pollen coats and male fertility.</text>
</comment>
<comment type="subcellular location">
    <subcellularLocation>
        <location evidence="3 4">Secreted</location>
        <location evidence="3 4">Extracellular space</location>
        <location evidence="3 4">Extracellular matrix</location>
        <location evidence="3 4">Pollen coat</location>
    </subcellularLocation>
    <text>Localized in small granules in the tapetal cells.</text>
</comment>
<comment type="tissue specificity">
    <text evidence="3">Flower buds and pollen.</text>
</comment>
<comment type="developmental stage">
    <text evidence="4">Strongly expressed in tapetal cells at the flower developmental stage 10 to middle 12, where the components of pollen coat are synthesized actively.</text>
</comment>
<comment type="disruption phenotype">
    <text evidence="4">Reduced pollen fertility. Pollen grain exhibit a partial formation of coat and impaired water absorption and germination capacities.</text>
</comment>
<comment type="similarity">
    <text evidence="5">Belongs to the 'GDSL' lipolytic enzyme family.</text>
</comment>
<comment type="sequence caution" evidence="5">
    <conflict type="erroneous gene model prediction">
        <sequence resource="EMBL-CDS" id="AAF26759"/>
    </conflict>
    <text>The predicted gene At1g75930 has been split into 2 genes: At1g75930 and At1g75940.</text>
</comment>
<proteinExistence type="evidence at protein level"/>
<name>EXL6_ARATH</name>
<sequence>MFRGKIFVLSLFSIYVLSSAAEKNTSFSALFAFGDSVLDTGNNNFLLTLLKGNYWPYGLSFDYKFPTGRFGNGRVFTDIVAEGLQIKRLVPAYSKIRRISSEDLKTGVCFASGGSGIDDLTSRTLRVLSAGDQVKDFKDYLKKLRRVVKRKKKVKEIVSNAVFLISEGNNDLGYFVAPALLRLQSTTTYTSKMVVWTRKFLKDLYDLGARKFAVMGVMPVGCLPIHRASFGGVFGWCNFLLNRITEDFNMKLQKGLTSYAVEYDFKDAKFVYVDIYGTLMDLVKNPMAYGFTEAKKACCCMPNAIIPCFHPDKYVFYDFAHPSQKAYEVISKPIVYQIAKGLA</sequence>
<keyword id="KW-0903">Direct protein sequencing</keyword>
<keyword id="KW-0272">Extracellular matrix</keyword>
<keyword id="KW-0325">Glycoprotein</keyword>
<keyword id="KW-0378">Hydrolase</keyword>
<keyword id="KW-0442">Lipid degradation</keyword>
<keyword id="KW-0443">Lipid metabolism</keyword>
<keyword id="KW-1185">Reference proteome</keyword>
<keyword id="KW-0964">Secreted</keyword>
<keyword id="KW-0732">Signal</keyword>
<gene>
    <name type="primary">EXL6</name>
    <name type="ordered locus">At1g75930</name>
    <name type="ORF">T4O12.260</name>
</gene>
<reference key="1">
    <citation type="journal article" date="2001" name="Science">
        <title>Gene families from the Arabidopsis thaliana pollen coat proteome.</title>
        <authorList>
            <person name="Mayfield J.A."/>
            <person name="Fiebig A."/>
            <person name="Johnstone S.E."/>
            <person name="Preuss D."/>
        </authorList>
    </citation>
    <scope>NUCLEOTIDE SEQUENCE [MRNA]</scope>
    <scope>PROTEIN SEQUENCE OF 75-87; 255-269 AND 326-340</scope>
    <scope>IDENTIFICATION BY MASS SPECTROMETRY</scope>
    <scope>SUBCELLULAR LOCATION</scope>
    <scope>TISSUE SPECIFICITY</scope>
    <source>
        <strain>cv. Landsberg erecta</strain>
        <tissue>Pollen</tissue>
    </source>
</reference>
<reference key="2">
    <citation type="journal article" date="2000" name="Nature">
        <title>Sequence and analysis of chromosome 1 of the plant Arabidopsis thaliana.</title>
        <authorList>
            <person name="Theologis A."/>
            <person name="Ecker J.R."/>
            <person name="Palm C.J."/>
            <person name="Federspiel N.A."/>
            <person name="Kaul S."/>
            <person name="White O."/>
            <person name="Alonso J."/>
            <person name="Altafi H."/>
            <person name="Araujo R."/>
            <person name="Bowman C.L."/>
            <person name="Brooks S.Y."/>
            <person name="Buehler E."/>
            <person name="Chan A."/>
            <person name="Chao Q."/>
            <person name="Chen H."/>
            <person name="Cheuk R.F."/>
            <person name="Chin C.W."/>
            <person name="Chung M.K."/>
            <person name="Conn L."/>
            <person name="Conway A.B."/>
            <person name="Conway A.R."/>
            <person name="Creasy T.H."/>
            <person name="Dewar K."/>
            <person name="Dunn P."/>
            <person name="Etgu P."/>
            <person name="Feldblyum T.V."/>
            <person name="Feng J.-D."/>
            <person name="Fong B."/>
            <person name="Fujii C.Y."/>
            <person name="Gill J.E."/>
            <person name="Goldsmith A.D."/>
            <person name="Haas B."/>
            <person name="Hansen N.F."/>
            <person name="Hughes B."/>
            <person name="Huizar L."/>
            <person name="Hunter J.L."/>
            <person name="Jenkins J."/>
            <person name="Johnson-Hopson C."/>
            <person name="Khan S."/>
            <person name="Khaykin E."/>
            <person name="Kim C.J."/>
            <person name="Koo H.L."/>
            <person name="Kremenetskaia I."/>
            <person name="Kurtz D.B."/>
            <person name="Kwan A."/>
            <person name="Lam B."/>
            <person name="Langin-Hooper S."/>
            <person name="Lee A."/>
            <person name="Lee J.M."/>
            <person name="Lenz C.A."/>
            <person name="Li J.H."/>
            <person name="Li Y.-P."/>
            <person name="Lin X."/>
            <person name="Liu S.X."/>
            <person name="Liu Z.A."/>
            <person name="Luros J.S."/>
            <person name="Maiti R."/>
            <person name="Marziali A."/>
            <person name="Militscher J."/>
            <person name="Miranda M."/>
            <person name="Nguyen M."/>
            <person name="Nierman W.C."/>
            <person name="Osborne B.I."/>
            <person name="Pai G."/>
            <person name="Peterson J."/>
            <person name="Pham P.K."/>
            <person name="Rizzo M."/>
            <person name="Rooney T."/>
            <person name="Rowley D."/>
            <person name="Sakano H."/>
            <person name="Salzberg S.L."/>
            <person name="Schwartz J.R."/>
            <person name="Shinn P."/>
            <person name="Southwick A.M."/>
            <person name="Sun H."/>
            <person name="Tallon L.J."/>
            <person name="Tambunga G."/>
            <person name="Toriumi M.J."/>
            <person name="Town C.D."/>
            <person name="Utterback T."/>
            <person name="Van Aken S."/>
            <person name="Vaysberg M."/>
            <person name="Vysotskaia V.S."/>
            <person name="Walker M."/>
            <person name="Wu D."/>
            <person name="Yu G."/>
            <person name="Fraser C.M."/>
            <person name="Venter J.C."/>
            <person name="Davis R.W."/>
        </authorList>
    </citation>
    <scope>NUCLEOTIDE SEQUENCE [LARGE SCALE GENOMIC DNA]</scope>
    <source>
        <strain>cv. Columbia</strain>
    </source>
</reference>
<reference key="3">
    <citation type="journal article" date="2017" name="Plant J.">
        <title>Araport11: a complete reannotation of the Arabidopsis thaliana reference genome.</title>
        <authorList>
            <person name="Cheng C.Y."/>
            <person name="Krishnakumar V."/>
            <person name="Chan A.P."/>
            <person name="Thibaud-Nissen F."/>
            <person name="Schobel S."/>
            <person name="Town C.D."/>
        </authorList>
    </citation>
    <scope>GENOME REANNOTATION</scope>
    <source>
        <strain>cv. Columbia</strain>
    </source>
</reference>
<reference key="4">
    <citation type="journal article" date="2004" name="Prog. Lipid Res.">
        <title>GDSL family of serine esterases/lipases.</title>
        <authorList>
            <person name="Akoh C.C."/>
            <person name="Lee G.-C."/>
            <person name="Liaw Y.-C."/>
            <person name="Huang T.-H."/>
            <person name="Shaw J.-F."/>
        </authorList>
    </citation>
    <scope>REVIEW</scope>
</reference>
<reference key="5">
    <citation type="journal article" date="2008" name="Pak. J. Biol. Sci.">
        <title>Sequence analysis of GDSL lipase gene family in Arabidopsis thaliana.</title>
        <authorList>
            <person name="Ling H."/>
        </authorList>
    </citation>
    <scope>GENE FAMILY</scope>
</reference>
<reference key="6">
    <citation type="book" date="2008" name="Proceedings of the 19th international conference on Arabidopsis research">
        <title>Function of Arabidopsis EXL4 and EXL6 to form pollen coats.</title>
        <authorList>
            <person name="Sassa M."/>
            <person name="Saito H."/>
            <person name="Nakamura K."/>
            <person name="Ishiguro S."/>
        </authorList>
    </citation>
    <scope>FUNCTION</scope>
    <scope>DISRUPTION PHENOTYPE</scope>
    <scope>DEVELOPMENTAL STAGE</scope>
    <scope>SUBCELLULAR LOCATION</scope>
</reference>
<protein>
    <recommendedName>
        <fullName>GDSL esterase/lipase EXL6</fullName>
        <ecNumber>3.1.1.-</ecNumber>
    </recommendedName>
    <alternativeName>
        <fullName>Family II extracellular lipase 6</fullName>
        <shortName>Family II lipase EXL6</shortName>
    </alternativeName>
</protein>
<feature type="signal peptide" evidence="2">
    <location>
        <begin position="1"/>
        <end position="21"/>
    </location>
</feature>
<feature type="chain" id="PRO_0000367333" description="GDSL esterase/lipase EXL6">
    <location>
        <begin position="22"/>
        <end position="343"/>
    </location>
</feature>
<feature type="active site" description="Nucleophile" evidence="1">
    <location>
        <position position="36"/>
    </location>
</feature>
<feature type="active site" evidence="1">
    <location>
        <position position="318"/>
    </location>
</feature>
<feature type="active site" evidence="1">
    <location>
        <position position="321"/>
    </location>
</feature>
<feature type="glycosylation site" description="N-linked (GlcNAc...) asparagine" evidence="2">
    <location>
        <position position="24"/>
    </location>
</feature>
<feature type="sequence conflict" description="In Ref. 1." evidence="5" ref="1">
    <original>Y</original>
    <variation>T</variation>
    <location>
        <position position="259"/>
    </location>
</feature>
<dbReference type="EC" id="3.1.1.-"/>
<dbReference type="EMBL" id="AY028614">
    <property type="protein sequence ID" value="AAK30021.1"/>
    <property type="molecule type" value="mRNA"/>
</dbReference>
<dbReference type="EMBL" id="AC007396">
    <property type="protein sequence ID" value="AAF26759.2"/>
    <property type="status" value="ALT_SEQ"/>
    <property type="molecule type" value="Genomic_DNA"/>
</dbReference>
<dbReference type="EMBL" id="CP002684">
    <property type="protein sequence ID" value="AEE35778.1"/>
    <property type="molecule type" value="Genomic_DNA"/>
</dbReference>
<dbReference type="PIR" id="B96788">
    <property type="entry name" value="B96788"/>
</dbReference>
<dbReference type="RefSeq" id="NP_177721.1">
    <property type="nucleotide sequence ID" value="NM_106243.4"/>
</dbReference>
<dbReference type="SMR" id="Q93X94"/>
<dbReference type="FunCoup" id="Q93X94">
    <property type="interactions" value="92"/>
</dbReference>
<dbReference type="STRING" id="3702.Q93X94"/>
<dbReference type="GlyCosmos" id="Q93X94">
    <property type="glycosylation" value="1 site, No reported glycans"/>
</dbReference>
<dbReference type="GlyGen" id="Q93X94">
    <property type="glycosylation" value="1 site"/>
</dbReference>
<dbReference type="PaxDb" id="3702-AT1G75930.1"/>
<dbReference type="ProteomicsDB" id="222267"/>
<dbReference type="EnsemblPlants" id="AT1G75930.1">
    <property type="protein sequence ID" value="AT1G75930.1"/>
    <property type="gene ID" value="AT1G75930"/>
</dbReference>
<dbReference type="GeneID" id="843926"/>
<dbReference type="Gramene" id="AT1G75930.1">
    <property type="protein sequence ID" value="AT1G75930.1"/>
    <property type="gene ID" value="AT1G75930"/>
</dbReference>
<dbReference type="KEGG" id="ath:AT1G75930"/>
<dbReference type="Araport" id="AT1G75930"/>
<dbReference type="TAIR" id="AT1G75930">
    <property type="gene designation" value="EXL6"/>
</dbReference>
<dbReference type="eggNOG" id="ENOG502R619">
    <property type="taxonomic scope" value="Eukaryota"/>
</dbReference>
<dbReference type="HOGENOM" id="CLU_015101_0_1_1"/>
<dbReference type="InParanoid" id="Q93X94"/>
<dbReference type="OMA" id="SKMVGWT"/>
<dbReference type="PhylomeDB" id="Q93X94"/>
<dbReference type="BioCyc" id="ARA:AT1G75930-MONOMER"/>
<dbReference type="PRO" id="PR:Q93X94"/>
<dbReference type="Proteomes" id="UP000006548">
    <property type="component" value="Chromosome 1"/>
</dbReference>
<dbReference type="ExpressionAtlas" id="Q93X94">
    <property type="expression patterns" value="baseline and differential"/>
</dbReference>
<dbReference type="GO" id="GO:0005576">
    <property type="term" value="C:extracellular region"/>
    <property type="evidence" value="ECO:0007669"/>
    <property type="project" value="UniProtKB-KW"/>
</dbReference>
<dbReference type="GO" id="GO:0070505">
    <property type="term" value="C:pollen coat"/>
    <property type="evidence" value="ECO:0007669"/>
    <property type="project" value="UniProtKB-SubCell"/>
</dbReference>
<dbReference type="GO" id="GO:0016298">
    <property type="term" value="F:lipase activity"/>
    <property type="evidence" value="ECO:0000250"/>
    <property type="project" value="TAIR"/>
</dbReference>
<dbReference type="GO" id="GO:0016042">
    <property type="term" value="P:lipid catabolic process"/>
    <property type="evidence" value="ECO:0007669"/>
    <property type="project" value="UniProtKB-KW"/>
</dbReference>
<dbReference type="CDD" id="cd01837">
    <property type="entry name" value="SGNH_plant_lipase_like"/>
    <property type="match status" value="1"/>
</dbReference>
<dbReference type="FunFam" id="3.40.50.1110:FF:000003">
    <property type="entry name" value="GDSL esterase/lipase APG"/>
    <property type="match status" value="1"/>
</dbReference>
<dbReference type="Gene3D" id="3.40.50.1110">
    <property type="entry name" value="SGNH hydrolase"/>
    <property type="match status" value="1"/>
</dbReference>
<dbReference type="InterPro" id="IPR001087">
    <property type="entry name" value="GDSL"/>
</dbReference>
<dbReference type="InterPro" id="IPR050592">
    <property type="entry name" value="GDSL_lipolytic_enzyme"/>
</dbReference>
<dbReference type="InterPro" id="IPR008265">
    <property type="entry name" value="Lipase_GDSL_AS"/>
</dbReference>
<dbReference type="InterPro" id="IPR036514">
    <property type="entry name" value="SGNH_hydro_sf"/>
</dbReference>
<dbReference type="InterPro" id="IPR035669">
    <property type="entry name" value="SGNH_plant_lipase-like"/>
</dbReference>
<dbReference type="PANTHER" id="PTHR45642">
    <property type="entry name" value="GDSL ESTERASE/LIPASE EXL3"/>
    <property type="match status" value="1"/>
</dbReference>
<dbReference type="PANTHER" id="PTHR45642:SF99">
    <property type="entry name" value="GDSL ESTERASE_LIPASE EXL6"/>
    <property type="match status" value="1"/>
</dbReference>
<dbReference type="Pfam" id="PF00657">
    <property type="entry name" value="Lipase_GDSL"/>
    <property type="match status" value="1"/>
</dbReference>
<dbReference type="SUPFAM" id="SSF52266">
    <property type="entry name" value="SGNH hydrolase"/>
    <property type="match status" value="1"/>
</dbReference>
<dbReference type="PROSITE" id="PS01098">
    <property type="entry name" value="LIPASE_GDSL_SER"/>
    <property type="match status" value="1"/>
</dbReference>
<organism>
    <name type="scientific">Arabidopsis thaliana</name>
    <name type="common">Mouse-ear cress</name>
    <dbReference type="NCBI Taxonomy" id="3702"/>
    <lineage>
        <taxon>Eukaryota</taxon>
        <taxon>Viridiplantae</taxon>
        <taxon>Streptophyta</taxon>
        <taxon>Embryophyta</taxon>
        <taxon>Tracheophyta</taxon>
        <taxon>Spermatophyta</taxon>
        <taxon>Magnoliopsida</taxon>
        <taxon>eudicotyledons</taxon>
        <taxon>Gunneridae</taxon>
        <taxon>Pentapetalae</taxon>
        <taxon>rosids</taxon>
        <taxon>malvids</taxon>
        <taxon>Brassicales</taxon>
        <taxon>Brassicaceae</taxon>
        <taxon>Camelineae</taxon>
        <taxon>Arabidopsis</taxon>
    </lineage>
</organism>
<evidence type="ECO:0000250" key="1"/>
<evidence type="ECO:0000255" key="2"/>
<evidence type="ECO:0000269" key="3">
    <source>
    </source>
</evidence>
<evidence type="ECO:0000269" key="4">
    <source ref="6"/>
</evidence>
<evidence type="ECO:0000305" key="5"/>
<accession>Q93X94</accession>
<accession>Q9LQS3</accession>